<feature type="chain" id="PRO_0000300479" description="Uncharacterized oxidoreductase SERP2049">
    <location>
        <begin position="1"/>
        <end position="230"/>
    </location>
</feature>
<feature type="active site" description="Proton acceptor" evidence="1">
    <location>
        <position position="152"/>
    </location>
</feature>
<feature type="binding site" evidence="1">
    <location>
        <begin position="10"/>
        <end position="34"/>
    </location>
    <ligand>
        <name>NADP(+)</name>
        <dbReference type="ChEBI" id="CHEBI:58349"/>
    </ligand>
</feature>
<feature type="binding site" evidence="1">
    <location>
        <position position="139"/>
    </location>
    <ligand>
        <name>substrate</name>
    </ligand>
</feature>
<sequence length="230" mass="24541">MAKVKEKVAVVTGASSGIGEAIAKKLSQQGASIVLVGRNEQRLNEIAQQLNTPAKVVSADVTVKSNIDDMLKAVIDHFGHIDIVVNSAGQSLSSKITDYNVEQWDTMIDVNIKGTLHVLQATLPYLLKQSSGHIINLASVSGFEPTKTNAVYGATKAAIHAITQSLEKELARTGVKVTSISPGMVDTPMTEGTDFGERKKLEAQNIADAVVYALTQPSHVNVNEVTIRPV</sequence>
<proteinExistence type="inferred from homology"/>
<evidence type="ECO:0000250" key="1"/>
<evidence type="ECO:0000305" key="2"/>
<keyword id="KW-0560">Oxidoreductase</keyword>
<keyword id="KW-1185">Reference proteome</keyword>
<dbReference type="EC" id="1.-.-.-"/>
<dbReference type="EMBL" id="CP000029">
    <property type="protein sequence ID" value="AAW52889.1"/>
    <property type="molecule type" value="Genomic_DNA"/>
</dbReference>
<dbReference type="RefSeq" id="WP_002438215.1">
    <property type="nucleotide sequence ID" value="NC_002976.3"/>
</dbReference>
<dbReference type="SMR" id="Q5HLD8"/>
<dbReference type="STRING" id="176279.SERP2049"/>
<dbReference type="KEGG" id="ser:SERP2049"/>
<dbReference type="eggNOG" id="COG4221">
    <property type="taxonomic scope" value="Bacteria"/>
</dbReference>
<dbReference type="HOGENOM" id="CLU_010194_2_10_9"/>
<dbReference type="Proteomes" id="UP000000531">
    <property type="component" value="Chromosome"/>
</dbReference>
<dbReference type="GO" id="GO:0016491">
    <property type="term" value="F:oxidoreductase activity"/>
    <property type="evidence" value="ECO:0007669"/>
    <property type="project" value="UniProtKB-KW"/>
</dbReference>
<dbReference type="CDD" id="cd05233">
    <property type="entry name" value="SDR_c"/>
    <property type="match status" value="1"/>
</dbReference>
<dbReference type="FunFam" id="3.40.50.720:FF:000047">
    <property type="entry name" value="NADP-dependent L-serine/L-allo-threonine dehydrogenase"/>
    <property type="match status" value="1"/>
</dbReference>
<dbReference type="Gene3D" id="3.40.50.720">
    <property type="entry name" value="NAD(P)-binding Rossmann-like Domain"/>
    <property type="match status" value="1"/>
</dbReference>
<dbReference type="InterPro" id="IPR036291">
    <property type="entry name" value="NAD(P)-bd_dom_sf"/>
</dbReference>
<dbReference type="InterPro" id="IPR002347">
    <property type="entry name" value="SDR_fam"/>
</dbReference>
<dbReference type="PANTHER" id="PTHR43115">
    <property type="entry name" value="DEHYDROGENASE/REDUCTASE SDR FAMILY MEMBER 11"/>
    <property type="match status" value="1"/>
</dbReference>
<dbReference type="PANTHER" id="PTHR43115:SF4">
    <property type="entry name" value="DEHYDROGENASE_REDUCTASE SDR FAMILY MEMBER 11"/>
    <property type="match status" value="1"/>
</dbReference>
<dbReference type="Pfam" id="PF00106">
    <property type="entry name" value="adh_short"/>
    <property type="match status" value="1"/>
</dbReference>
<dbReference type="PIRSF" id="PIRSF000126">
    <property type="entry name" value="11-beta-HSD1"/>
    <property type="match status" value="1"/>
</dbReference>
<dbReference type="PRINTS" id="PR00081">
    <property type="entry name" value="GDHRDH"/>
</dbReference>
<dbReference type="PRINTS" id="PR00080">
    <property type="entry name" value="SDRFAMILY"/>
</dbReference>
<dbReference type="SMART" id="SM00822">
    <property type="entry name" value="PKS_KR"/>
    <property type="match status" value="1"/>
</dbReference>
<dbReference type="SUPFAM" id="SSF51735">
    <property type="entry name" value="NAD(P)-binding Rossmann-fold domains"/>
    <property type="match status" value="1"/>
</dbReference>
<gene>
    <name type="ordered locus">SERP2049</name>
</gene>
<reference key="1">
    <citation type="journal article" date="2005" name="J. Bacteriol.">
        <title>Insights on evolution of virulence and resistance from the complete genome analysis of an early methicillin-resistant Staphylococcus aureus strain and a biofilm-producing methicillin-resistant Staphylococcus epidermidis strain.</title>
        <authorList>
            <person name="Gill S.R."/>
            <person name="Fouts D.E."/>
            <person name="Archer G.L."/>
            <person name="Mongodin E.F."/>
            <person name="DeBoy R.T."/>
            <person name="Ravel J."/>
            <person name="Paulsen I.T."/>
            <person name="Kolonay J.F."/>
            <person name="Brinkac L.M."/>
            <person name="Beanan M.J."/>
            <person name="Dodson R.J."/>
            <person name="Daugherty S.C."/>
            <person name="Madupu R."/>
            <person name="Angiuoli S.V."/>
            <person name="Durkin A.S."/>
            <person name="Haft D.H."/>
            <person name="Vamathevan J.J."/>
            <person name="Khouri H."/>
            <person name="Utterback T.R."/>
            <person name="Lee C."/>
            <person name="Dimitrov G."/>
            <person name="Jiang L."/>
            <person name="Qin H."/>
            <person name="Weidman J."/>
            <person name="Tran K."/>
            <person name="Kang K.H."/>
            <person name="Hance I.R."/>
            <person name="Nelson K.E."/>
            <person name="Fraser C.M."/>
        </authorList>
    </citation>
    <scope>NUCLEOTIDE SEQUENCE [LARGE SCALE GENOMIC DNA]</scope>
    <source>
        <strain>ATCC 35984 / DSM 28319 / BCRC 17069 / CCUG 31568 / BM 3577 / RP62A</strain>
    </source>
</reference>
<protein>
    <recommendedName>
        <fullName>Uncharacterized oxidoreductase SERP2049</fullName>
        <ecNumber>1.-.-.-</ecNumber>
    </recommendedName>
</protein>
<comment type="similarity">
    <text evidence="2">Belongs to the short-chain dehydrogenases/reductases (SDR) family.</text>
</comment>
<organism>
    <name type="scientific">Staphylococcus epidermidis (strain ATCC 35984 / DSM 28319 / BCRC 17069 / CCUG 31568 / BM 3577 / RP62A)</name>
    <dbReference type="NCBI Taxonomy" id="176279"/>
    <lineage>
        <taxon>Bacteria</taxon>
        <taxon>Bacillati</taxon>
        <taxon>Bacillota</taxon>
        <taxon>Bacilli</taxon>
        <taxon>Bacillales</taxon>
        <taxon>Staphylococcaceae</taxon>
        <taxon>Staphylococcus</taxon>
    </lineage>
</organism>
<name>Y2049_STAEQ</name>
<accession>Q5HLD8</accession>